<protein>
    <recommendedName>
        <fullName>Protein YhjR</fullName>
    </recommendedName>
</protein>
<feature type="chain" id="PRO_0000169579" description="Protein YhjR">
    <location>
        <begin position="1"/>
        <end position="62"/>
    </location>
</feature>
<reference key="1">
    <citation type="journal article" date="2002" name="Nucleic Acids Res.">
        <title>Genome sequence of Shigella flexneri 2a: insights into pathogenicity through comparison with genomes of Escherichia coli K12 and O157.</title>
        <authorList>
            <person name="Jin Q."/>
            <person name="Yuan Z."/>
            <person name="Xu J."/>
            <person name="Wang Y."/>
            <person name="Shen Y."/>
            <person name="Lu W."/>
            <person name="Wang J."/>
            <person name="Liu H."/>
            <person name="Yang J."/>
            <person name="Yang F."/>
            <person name="Zhang X."/>
            <person name="Zhang J."/>
            <person name="Yang G."/>
            <person name="Wu H."/>
            <person name="Qu D."/>
            <person name="Dong J."/>
            <person name="Sun L."/>
            <person name="Xue Y."/>
            <person name="Zhao A."/>
            <person name="Gao Y."/>
            <person name="Zhu J."/>
            <person name="Kan B."/>
            <person name="Ding K."/>
            <person name="Chen S."/>
            <person name="Cheng H."/>
            <person name="Yao Z."/>
            <person name="He B."/>
            <person name="Chen R."/>
            <person name="Ma D."/>
            <person name="Qiang B."/>
            <person name="Wen Y."/>
            <person name="Hou Y."/>
            <person name="Yu J."/>
        </authorList>
    </citation>
    <scope>NUCLEOTIDE SEQUENCE [LARGE SCALE GENOMIC DNA]</scope>
    <source>
        <strain>301 / Serotype 2a</strain>
    </source>
</reference>
<reference key="2">
    <citation type="journal article" date="2003" name="Infect. Immun.">
        <title>Complete genome sequence and comparative genomics of Shigella flexneri serotype 2a strain 2457T.</title>
        <authorList>
            <person name="Wei J."/>
            <person name="Goldberg M.B."/>
            <person name="Burland V."/>
            <person name="Venkatesan M.M."/>
            <person name="Deng W."/>
            <person name="Fournier G."/>
            <person name="Mayhew G.F."/>
            <person name="Plunkett G. III"/>
            <person name="Rose D.J."/>
            <person name="Darling A."/>
            <person name="Mau B."/>
            <person name="Perna N.T."/>
            <person name="Payne S.M."/>
            <person name="Runyen-Janecky L.J."/>
            <person name="Zhou S."/>
            <person name="Schwartz D.C."/>
            <person name="Blattner F.R."/>
        </authorList>
    </citation>
    <scope>NUCLEOTIDE SEQUENCE [LARGE SCALE GENOMIC DNA]</scope>
    <source>
        <strain>ATCC 700930 / 2457T / Serotype 2a</strain>
    </source>
</reference>
<dbReference type="EMBL" id="AE005674">
    <property type="status" value="NOT_ANNOTATED_CDS"/>
    <property type="molecule type" value="Genomic_DNA"/>
</dbReference>
<dbReference type="EMBL" id="AE014073">
    <property type="protein sequence ID" value="AAP19167.1"/>
    <property type="molecule type" value="Genomic_DNA"/>
</dbReference>
<dbReference type="SMR" id="P0ADJ4"/>
<dbReference type="KEGG" id="sfx:S4200"/>
<dbReference type="PATRIC" id="fig|623.156.peg.2076"/>
<dbReference type="HOGENOM" id="CLU_185167_0_0_6"/>
<dbReference type="Proteomes" id="UP000001006">
    <property type="component" value="Chromosome"/>
</dbReference>
<dbReference type="Proteomes" id="UP000002673">
    <property type="component" value="Chromosome"/>
</dbReference>
<dbReference type="InterPro" id="IPR024487">
    <property type="entry name" value="CBP_BcsR"/>
</dbReference>
<dbReference type="NCBIfam" id="NF040717">
    <property type="entry name" value="BcsR_only"/>
    <property type="match status" value="1"/>
</dbReference>
<dbReference type="Pfam" id="PF10945">
    <property type="entry name" value="CBP_BcsR"/>
    <property type="match status" value="1"/>
</dbReference>
<name>YHJR_SHIFL</name>
<keyword id="KW-1185">Reference proteome</keyword>
<accession>P0ADJ4</accession>
<accession>P37656</accession>
<organism>
    <name type="scientific">Shigella flexneri</name>
    <dbReference type="NCBI Taxonomy" id="623"/>
    <lineage>
        <taxon>Bacteria</taxon>
        <taxon>Pseudomonadati</taxon>
        <taxon>Pseudomonadota</taxon>
        <taxon>Gammaproteobacteria</taxon>
        <taxon>Enterobacterales</taxon>
        <taxon>Enterobacteriaceae</taxon>
        <taxon>Shigella</taxon>
    </lineage>
</organism>
<gene>
    <name type="primary">yhjR</name>
    <name type="ordered locus">SF3565.1</name>
    <name type="ordered locus">S4200</name>
</gene>
<proteinExistence type="predicted"/>
<sequence>MNNNEPDTLPDPAIGYIFQNDIVALKQAFSLPDIDYADISQREQLAAALKRWPLLAEFAQQK</sequence>